<comment type="function">
    <text evidence="1">Involved in lipopolysaccharide (LPS) biosynthesis. Translocates lipid A-core from the inner to the outer leaflet of the inner membrane. Transmembrane domains (TMD) form a pore in the inner membrane and the ATP-binding domain (NBD) is responsible for energy generation.</text>
</comment>
<comment type="catalytic activity">
    <reaction evidence="1">
        <text>ATP + H2O + lipid A-core oligosaccharideSide 1 = ADP + phosphate + lipid A-core oligosaccharideSide 2.</text>
        <dbReference type="EC" id="7.5.2.6"/>
    </reaction>
</comment>
<comment type="subunit">
    <text evidence="1">Homodimer.</text>
</comment>
<comment type="subcellular location">
    <subcellularLocation>
        <location evidence="1">Cell inner membrane</location>
        <topology evidence="1">Multi-pass membrane protein</topology>
    </subcellularLocation>
</comment>
<comment type="domain">
    <text evidence="1">In MsbA the ATP-binding domain (NBD) and the transmembrane domain (TMD) are fused.</text>
</comment>
<comment type="similarity">
    <text evidence="1">Belongs to the ABC transporter superfamily. Lipid exporter (TC 3.A.1.106) family.</text>
</comment>
<dbReference type="EC" id="7.5.2.6" evidence="1"/>
<dbReference type="EMBL" id="BX571864">
    <property type="protein sequence ID" value="CAE13923.1"/>
    <property type="molecule type" value="Genomic_DNA"/>
</dbReference>
<dbReference type="SMR" id="Q7N6C6"/>
<dbReference type="STRING" id="243265.plu1630"/>
<dbReference type="KEGG" id="plu:plu1630"/>
<dbReference type="eggNOG" id="COG1132">
    <property type="taxonomic scope" value="Bacteria"/>
</dbReference>
<dbReference type="HOGENOM" id="CLU_000604_84_3_6"/>
<dbReference type="Proteomes" id="UP000002514">
    <property type="component" value="Chromosome"/>
</dbReference>
<dbReference type="GO" id="GO:0005886">
    <property type="term" value="C:plasma membrane"/>
    <property type="evidence" value="ECO:0007669"/>
    <property type="project" value="UniProtKB-SubCell"/>
</dbReference>
<dbReference type="GO" id="GO:0015421">
    <property type="term" value="F:ABC-type oligopeptide transporter activity"/>
    <property type="evidence" value="ECO:0007669"/>
    <property type="project" value="TreeGrafter"/>
</dbReference>
<dbReference type="GO" id="GO:0005524">
    <property type="term" value="F:ATP binding"/>
    <property type="evidence" value="ECO:0007669"/>
    <property type="project" value="UniProtKB-KW"/>
</dbReference>
<dbReference type="GO" id="GO:0016887">
    <property type="term" value="F:ATP hydrolysis activity"/>
    <property type="evidence" value="ECO:0007669"/>
    <property type="project" value="InterPro"/>
</dbReference>
<dbReference type="GO" id="GO:0034040">
    <property type="term" value="F:ATPase-coupled lipid transmembrane transporter activity"/>
    <property type="evidence" value="ECO:0007669"/>
    <property type="project" value="InterPro"/>
</dbReference>
<dbReference type="CDD" id="cd18552">
    <property type="entry name" value="ABC_6TM_MsbA_like"/>
    <property type="match status" value="1"/>
</dbReference>
<dbReference type="CDD" id="cd03251">
    <property type="entry name" value="ABCC_MsbA"/>
    <property type="match status" value="1"/>
</dbReference>
<dbReference type="FunFam" id="1.20.1560.10:FF:000008">
    <property type="entry name" value="Lipid A export ATP-binding/permease protein MsbA"/>
    <property type="match status" value="1"/>
</dbReference>
<dbReference type="FunFam" id="3.40.50.300:FF:000140">
    <property type="entry name" value="Lipid A export ATP-binding/permease protein MsbA"/>
    <property type="match status" value="1"/>
</dbReference>
<dbReference type="Gene3D" id="1.20.1560.10">
    <property type="entry name" value="ABC transporter type 1, transmembrane domain"/>
    <property type="match status" value="1"/>
</dbReference>
<dbReference type="Gene3D" id="3.40.50.300">
    <property type="entry name" value="P-loop containing nucleotide triphosphate hydrolases"/>
    <property type="match status" value="1"/>
</dbReference>
<dbReference type="InterPro" id="IPR003593">
    <property type="entry name" value="AAA+_ATPase"/>
</dbReference>
<dbReference type="InterPro" id="IPR011527">
    <property type="entry name" value="ABC1_TM_dom"/>
</dbReference>
<dbReference type="InterPro" id="IPR036640">
    <property type="entry name" value="ABC1_TM_sf"/>
</dbReference>
<dbReference type="InterPro" id="IPR003439">
    <property type="entry name" value="ABC_transporter-like_ATP-bd"/>
</dbReference>
<dbReference type="InterPro" id="IPR017871">
    <property type="entry name" value="ABC_transporter-like_CS"/>
</dbReference>
<dbReference type="InterPro" id="IPR011917">
    <property type="entry name" value="ABC_transpr_lipidA"/>
</dbReference>
<dbReference type="InterPro" id="IPR027417">
    <property type="entry name" value="P-loop_NTPase"/>
</dbReference>
<dbReference type="InterPro" id="IPR039421">
    <property type="entry name" value="Type_1_exporter"/>
</dbReference>
<dbReference type="NCBIfam" id="TIGR02203">
    <property type="entry name" value="MsbA_lipidA"/>
    <property type="match status" value="1"/>
</dbReference>
<dbReference type="NCBIfam" id="NF008381">
    <property type="entry name" value="PRK11176.1"/>
    <property type="match status" value="1"/>
</dbReference>
<dbReference type="PANTHER" id="PTHR43394:SF1">
    <property type="entry name" value="ATP-BINDING CASSETTE SUB-FAMILY B MEMBER 10, MITOCHONDRIAL"/>
    <property type="match status" value="1"/>
</dbReference>
<dbReference type="PANTHER" id="PTHR43394">
    <property type="entry name" value="ATP-DEPENDENT PERMEASE MDL1, MITOCHONDRIAL"/>
    <property type="match status" value="1"/>
</dbReference>
<dbReference type="Pfam" id="PF00664">
    <property type="entry name" value="ABC_membrane"/>
    <property type="match status" value="1"/>
</dbReference>
<dbReference type="Pfam" id="PF00005">
    <property type="entry name" value="ABC_tran"/>
    <property type="match status" value="1"/>
</dbReference>
<dbReference type="SMART" id="SM00382">
    <property type="entry name" value="AAA"/>
    <property type="match status" value="1"/>
</dbReference>
<dbReference type="SUPFAM" id="SSF90123">
    <property type="entry name" value="ABC transporter transmembrane region"/>
    <property type="match status" value="1"/>
</dbReference>
<dbReference type="SUPFAM" id="SSF52540">
    <property type="entry name" value="P-loop containing nucleoside triphosphate hydrolases"/>
    <property type="match status" value="1"/>
</dbReference>
<dbReference type="PROSITE" id="PS50929">
    <property type="entry name" value="ABC_TM1F"/>
    <property type="match status" value="1"/>
</dbReference>
<dbReference type="PROSITE" id="PS00211">
    <property type="entry name" value="ABC_TRANSPORTER_1"/>
    <property type="match status" value="1"/>
</dbReference>
<dbReference type="PROSITE" id="PS50893">
    <property type="entry name" value="ABC_TRANSPORTER_2"/>
    <property type="match status" value="1"/>
</dbReference>
<dbReference type="PROSITE" id="PS51239">
    <property type="entry name" value="MSBA"/>
    <property type="match status" value="1"/>
</dbReference>
<evidence type="ECO:0000255" key="1">
    <source>
        <dbReference type="HAMAP-Rule" id="MF_01703"/>
    </source>
</evidence>
<name>MSBA_PHOLL</name>
<reference key="1">
    <citation type="journal article" date="2003" name="Nat. Biotechnol.">
        <title>The genome sequence of the entomopathogenic bacterium Photorhabdus luminescens.</title>
        <authorList>
            <person name="Duchaud E."/>
            <person name="Rusniok C."/>
            <person name="Frangeul L."/>
            <person name="Buchrieser C."/>
            <person name="Givaudan A."/>
            <person name="Taourit S."/>
            <person name="Bocs S."/>
            <person name="Boursaux-Eude C."/>
            <person name="Chandler M."/>
            <person name="Charles J.-F."/>
            <person name="Dassa E."/>
            <person name="Derose R."/>
            <person name="Derzelle S."/>
            <person name="Freyssinet G."/>
            <person name="Gaudriault S."/>
            <person name="Medigue C."/>
            <person name="Lanois A."/>
            <person name="Powell K."/>
            <person name="Siguier P."/>
            <person name="Vincent R."/>
            <person name="Wingate V."/>
            <person name="Zouine M."/>
            <person name="Glaser P."/>
            <person name="Boemare N."/>
            <person name="Danchin A."/>
            <person name="Kunst F."/>
        </authorList>
    </citation>
    <scope>NUCLEOTIDE SEQUENCE [LARGE SCALE GENOMIC DNA]</scope>
    <source>
        <strain>DSM 15139 / CIP 105565 / TT01</strain>
    </source>
</reference>
<accession>Q7N6C6</accession>
<organism>
    <name type="scientific">Photorhabdus laumondii subsp. laumondii (strain DSM 15139 / CIP 105565 / TT01)</name>
    <name type="common">Photorhabdus luminescens subsp. laumondii</name>
    <dbReference type="NCBI Taxonomy" id="243265"/>
    <lineage>
        <taxon>Bacteria</taxon>
        <taxon>Pseudomonadati</taxon>
        <taxon>Pseudomonadota</taxon>
        <taxon>Gammaproteobacteria</taxon>
        <taxon>Enterobacterales</taxon>
        <taxon>Morganellaceae</taxon>
        <taxon>Photorhabdus</taxon>
    </lineage>
</organism>
<protein>
    <recommendedName>
        <fullName evidence="1">ATP-dependent lipid A-core flippase</fullName>
        <ecNumber evidence="1">7.5.2.6</ecNumber>
    </recommendedName>
    <alternativeName>
        <fullName evidence="1">Lipid A export ATP-binding/permease protein MsbA</fullName>
    </alternativeName>
</protein>
<feature type="chain" id="PRO_0000092592" description="ATP-dependent lipid A-core flippase">
    <location>
        <begin position="1"/>
        <end position="581"/>
    </location>
</feature>
<feature type="transmembrane region" description="Helical" evidence="1">
    <location>
        <begin position="15"/>
        <end position="35"/>
    </location>
</feature>
<feature type="transmembrane region" description="Helical" evidence="1">
    <location>
        <begin position="68"/>
        <end position="88"/>
    </location>
</feature>
<feature type="transmembrane region" description="Helical" evidence="1">
    <location>
        <begin position="152"/>
        <end position="172"/>
    </location>
</feature>
<feature type="transmembrane region" description="Helical" evidence="1">
    <location>
        <begin position="252"/>
        <end position="272"/>
    </location>
</feature>
<feature type="transmembrane region" description="Helical" evidence="1">
    <location>
        <begin position="274"/>
        <end position="294"/>
    </location>
</feature>
<feature type="domain" description="ABC transmembrane type-1" evidence="1">
    <location>
        <begin position="27"/>
        <end position="309"/>
    </location>
</feature>
<feature type="domain" description="ABC transporter" evidence="1">
    <location>
        <begin position="341"/>
        <end position="577"/>
    </location>
</feature>
<feature type="binding site" evidence="1">
    <location>
        <begin position="375"/>
        <end position="382"/>
    </location>
    <ligand>
        <name>ATP</name>
        <dbReference type="ChEBI" id="CHEBI:30616"/>
    </ligand>
</feature>
<sequence>MNDKDLSTWQTFCRLWPIVSPFRIGLIVAAVALILNAAGDTLMLSLLKPLLDEGFGKASSDVLKWMPLIVIALMIMRGLSGFVSSYCISWVSGKVVMQMRRRLFSHMMGMPVSFFDQQSTGTLLSRITYDSEQVASSSSSALITVVREGASIIGLFVLMFYYSWQLSLILIVIAPIVSLVIRVVSKRFRSISKNMQNSMGQVTASAEQMLKGHKEVLIFGGQNVETERFNKVSNHMRQQGMKMVSASSISDPIIQLIASFALAFVLYAASFPDIMETLTAGKITVVFSSMIALMRPLKSLTNVNAQFQRGMAACQTLFSILDMEQEKDDGKLELKKANGDIEFRNVTFCYPTKELPALQNISMYIPAGKIVALVGRSGSGKSTIANLLTRFYDVNEGNIFLDGHDLREYKLSSLRGQVALVSQNVHLFNDTVANNIAYASENRYSREEIEKAAEMAYAMDFIRKLDNGLDTMIGENGVLLSGGQRQRIAIARALLRDSPVLILDEATSALDTESERAIQAALDELQKNRTSLVIAHRLSTIENADEILVVEDGHIVERGDHLSLLERNGVYSQLHRMQFGQ</sequence>
<proteinExistence type="inferred from homology"/>
<gene>
    <name evidence="1" type="primary">msbA</name>
    <name type="ordered locus">plu1630</name>
</gene>
<keyword id="KW-0067">ATP-binding</keyword>
<keyword id="KW-0997">Cell inner membrane</keyword>
<keyword id="KW-1003">Cell membrane</keyword>
<keyword id="KW-0445">Lipid transport</keyword>
<keyword id="KW-0472">Membrane</keyword>
<keyword id="KW-0547">Nucleotide-binding</keyword>
<keyword id="KW-1185">Reference proteome</keyword>
<keyword id="KW-1278">Translocase</keyword>
<keyword id="KW-0812">Transmembrane</keyword>
<keyword id="KW-1133">Transmembrane helix</keyword>
<keyword id="KW-0813">Transport</keyword>